<sequence>MSDDNFSRGDHSDRLLYCSFCGKSQDEVKKLIAGPSVYICNECVDLCNNIITQELSQISEDGESSDELPTPAKLSAALDDYVIGQDKAKRVLAVAVYNHYKRLRHQGKTDTSIELGKSNILLIGPTGSGKTLLAQTLARVLDVPFTIADATTLTEAGYVGEDVENIIQKLLQNCDYDVEKAQRGIVYIDEIDKISRKSDNPSITRDVSGEGVQQALLKLIEGTVASVPPQGGRKHPQQEFLQVDTSNILFICGGAFAGLERVISDRTEKSSIGFSATVKSKEEGRSFSEAVHRVETEDLVKFGLIPEFVGRLPVVATLSELDEEALMTILSQPKNALVKQYQHLFELEGVELEFTPESLREAAKLALERKTGARGLRSILESALLDCMYELPTRNDVVKVVMDATSIRGETAPLMVLEKEELAKNA</sequence>
<accession>A6VW21</accession>
<name>CLPX_MARMS</name>
<dbReference type="EMBL" id="CP000749">
    <property type="protein sequence ID" value="ABR70650.1"/>
    <property type="molecule type" value="Genomic_DNA"/>
</dbReference>
<dbReference type="SMR" id="A6VW21"/>
<dbReference type="STRING" id="400668.Mmwyl1_1724"/>
<dbReference type="KEGG" id="mmw:Mmwyl1_1724"/>
<dbReference type="eggNOG" id="COG1219">
    <property type="taxonomic scope" value="Bacteria"/>
</dbReference>
<dbReference type="HOGENOM" id="CLU_014218_8_2_6"/>
<dbReference type="OrthoDB" id="9804062at2"/>
<dbReference type="GO" id="GO:0009376">
    <property type="term" value="C:HslUV protease complex"/>
    <property type="evidence" value="ECO:0007669"/>
    <property type="project" value="TreeGrafter"/>
</dbReference>
<dbReference type="GO" id="GO:0005524">
    <property type="term" value="F:ATP binding"/>
    <property type="evidence" value="ECO:0007669"/>
    <property type="project" value="UniProtKB-UniRule"/>
</dbReference>
<dbReference type="GO" id="GO:0016887">
    <property type="term" value="F:ATP hydrolysis activity"/>
    <property type="evidence" value="ECO:0007669"/>
    <property type="project" value="InterPro"/>
</dbReference>
<dbReference type="GO" id="GO:0140662">
    <property type="term" value="F:ATP-dependent protein folding chaperone"/>
    <property type="evidence" value="ECO:0007669"/>
    <property type="project" value="InterPro"/>
</dbReference>
<dbReference type="GO" id="GO:0046983">
    <property type="term" value="F:protein dimerization activity"/>
    <property type="evidence" value="ECO:0007669"/>
    <property type="project" value="InterPro"/>
</dbReference>
<dbReference type="GO" id="GO:0051082">
    <property type="term" value="F:unfolded protein binding"/>
    <property type="evidence" value="ECO:0007669"/>
    <property type="project" value="UniProtKB-UniRule"/>
</dbReference>
<dbReference type="GO" id="GO:0008270">
    <property type="term" value="F:zinc ion binding"/>
    <property type="evidence" value="ECO:0007669"/>
    <property type="project" value="InterPro"/>
</dbReference>
<dbReference type="GO" id="GO:0051301">
    <property type="term" value="P:cell division"/>
    <property type="evidence" value="ECO:0007669"/>
    <property type="project" value="TreeGrafter"/>
</dbReference>
<dbReference type="GO" id="GO:0051603">
    <property type="term" value="P:proteolysis involved in protein catabolic process"/>
    <property type="evidence" value="ECO:0007669"/>
    <property type="project" value="TreeGrafter"/>
</dbReference>
<dbReference type="CDD" id="cd19497">
    <property type="entry name" value="RecA-like_ClpX"/>
    <property type="match status" value="1"/>
</dbReference>
<dbReference type="FunFam" id="1.10.8.60:FF:000002">
    <property type="entry name" value="ATP-dependent Clp protease ATP-binding subunit ClpX"/>
    <property type="match status" value="1"/>
</dbReference>
<dbReference type="FunFam" id="3.40.50.300:FF:000005">
    <property type="entry name" value="ATP-dependent Clp protease ATP-binding subunit ClpX"/>
    <property type="match status" value="1"/>
</dbReference>
<dbReference type="Gene3D" id="1.10.8.60">
    <property type="match status" value="1"/>
</dbReference>
<dbReference type="Gene3D" id="6.20.220.10">
    <property type="entry name" value="ClpX chaperone, C4-type zinc finger domain"/>
    <property type="match status" value="1"/>
</dbReference>
<dbReference type="Gene3D" id="3.40.50.300">
    <property type="entry name" value="P-loop containing nucleotide triphosphate hydrolases"/>
    <property type="match status" value="1"/>
</dbReference>
<dbReference type="HAMAP" id="MF_00175">
    <property type="entry name" value="ClpX"/>
    <property type="match status" value="1"/>
</dbReference>
<dbReference type="InterPro" id="IPR003593">
    <property type="entry name" value="AAA+_ATPase"/>
</dbReference>
<dbReference type="InterPro" id="IPR050052">
    <property type="entry name" value="ATP-dep_Clp_protease_ClpX"/>
</dbReference>
<dbReference type="InterPro" id="IPR003959">
    <property type="entry name" value="ATPase_AAA_core"/>
</dbReference>
<dbReference type="InterPro" id="IPR019489">
    <property type="entry name" value="Clp_ATPase_C"/>
</dbReference>
<dbReference type="InterPro" id="IPR004487">
    <property type="entry name" value="Clp_protease_ATP-bd_su_ClpX"/>
</dbReference>
<dbReference type="InterPro" id="IPR046425">
    <property type="entry name" value="ClpX_bact"/>
</dbReference>
<dbReference type="InterPro" id="IPR027417">
    <property type="entry name" value="P-loop_NTPase"/>
</dbReference>
<dbReference type="InterPro" id="IPR010603">
    <property type="entry name" value="Znf_CppX_C4"/>
</dbReference>
<dbReference type="InterPro" id="IPR038366">
    <property type="entry name" value="Znf_CppX_C4_sf"/>
</dbReference>
<dbReference type="NCBIfam" id="TIGR00382">
    <property type="entry name" value="clpX"/>
    <property type="match status" value="1"/>
</dbReference>
<dbReference type="NCBIfam" id="NF003745">
    <property type="entry name" value="PRK05342.1"/>
    <property type="match status" value="1"/>
</dbReference>
<dbReference type="PANTHER" id="PTHR48102:SF7">
    <property type="entry name" value="ATP-DEPENDENT CLP PROTEASE ATP-BINDING SUBUNIT CLPX-LIKE, MITOCHONDRIAL"/>
    <property type="match status" value="1"/>
</dbReference>
<dbReference type="PANTHER" id="PTHR48102">
    <property type="entry name" value="ATP-DEPENDENT CLP PROTEASE ATP-BINDING SUBUNIT CLPX-LIKE, MITOCHONDRIAL-RELATED"/>
    <property type="match status" value="1"/>
</dbReference>
<dbReference type="Pfam" id="PF07724">
    <property type="entry name" value="AAA_2"/>
    <property type="match status" value="1"/>
</dbReference>
<dbReference type="Pfam" id="PF10431">
    <property type="entry name" value="ClpB_D2-small"/>
    <property type="match status" value="1"/>
</dbReference>
<dbReference type="Pfam" id="PF06689">
    <property type="entry name" value="zf-C4_ClpX"/>
    <property type="match status" value="1"/>
</dbReference>
<dbReference type="SMART" id="SM00382">
    <property type="entry name" value="AAA"/>
    <property type="match status" value="1"/>
</dbReference>
<dbReference type="SMART" id="SM01086">
    <property type="entry name" value="ClpB_D2-small"/>
    <property type="match status" value="1"/>
</dbReference>
<dbReference type="SMART" id="SM00994">
    <property type="entry name" value="zf-C4_ClpX"/>
    <property type="match status" value="1"/>
</dbReference>
<dbReference type="SUPFAM" id="SSF57716">
    <property type="entry name" value="Glucocorticoid receptor-like (DNA-binding domain)"/>
    <property type="match status" value="1"/>
</dbReference>
<dbReference type="SUPFAM" id="SSF52540">
    <property type="entry name" value="P-loop containing nucleoside triphosphate hydrolases"/>
    <property type="match status" value="1"/>
</dbReference>
<dbReference type="PROSITE" id="PS51902">
    <property type="entry name" value="CLPX_ZB"/>
    <property type="match status" value="1"/>
</dbReference>
<reference key="1">
    <citation type="submission" date="2007-06" db="EMBL/GenBank/DDBJ databases">
        <title>Complete sequence of Marinomonas sp. MWYL1.</title>
        <authorList>
            <consortium name="US DOE Joint Genome Institute"/>
            <person name="Copeland A."/>
            <person name="Lucas S."/>
            <person name="Lapidus A."/>
            <person name="Barry K."/>
            <person name="Glavina del Rio T."/>
            <person name="Dalin E."/>
            <person name="Tice H."/>
            <person name="Pitluck S."/>
            <person name="Kiss H."/>
            <person name="Brettin T."/>
            <person name="Bruce D."/>
            <person name="Detter J.C."/>
            <person name="Han C."/>
            <person name="Schmutz J."/>
            <person name="Larimer F."/>
            <person name="Land M."/>
            <person name="Hauser L."/>
            <person name="Kyrpides N."/>
            <person name="Kim E."/>
            <person name="Johnston A.W.B."/>
            <person name="Todd J.D."/>
            <person name="Rogers R."/>
            <person name="Wexler M."/>
            <person name="Bond P.L."/>
            <person name="Li Y."/>
            <person name="Richardson P."/>
        </authorList>
    </citation>
    <scope>NUCLEOTIDE SEQUENCE [LARGE SCALE GENOMIC DNA]</scope>
    <source>
        <strain>MWYL1</strain>
    </source>
</reference>
<keyword id="KW-0067">ATP-binding</keyword>
<keyword id="KW-0143">Chaperone</keyword>
<keyword id="KW-0479">Metal-binding</keyword>
<keyword id="KW-0547">Nucleotide-binding</keyword>
<keyword id="KW-0862">Zinc</keyword>
<evidence type="ECO:0000255" key="1">
    <source>
        <dbReference type="HAMAP-Rule" id="MF_00175"/>
    </source>
</evidence>
<evidence type="ECO:0000255" key="2">
    <source>
        <dbReference type="PROSITE-ProRule" id="PRU01250"/>
    </source>
</evidence>
<feature type="chain" id="PRO_1000118373" description="ATP-dependent Clp protease ATP-binding subunit ClpX">
    <location>
        <begin position="1"/>
        <end position="426"/>
    </location>
</feature>
<feature type="domain" description="ClpX-type ZB" evidence="2">
    <location>
        <begin position="5"/>
        <end position="59"/>
    </location>
</feature>
<feature type="binding site" evidence="2">
    <location>
        <position position="18"/>
    </location>
    <ligand>
        <name>Zn(2+)</name>
        <dbReference type="ChEBI" id="CHEBI:29105"/>
    </ligand>
</feature>
<feature type="binding site" evidence="2">
    <location>
        <position position="21"/>
    </location>
    <ligand>
        <name>Zn(2+)</name>
        <dbReference type="ChEBI" id="CHEBI:29105"/>
    </ligand>
</feature>
<feature type="binding site" evidence="2">
    <location>
        <position position="40"/>
    </location>
    <ligand>
        <name>Zn(2+)</name>
        <dbReference type="ChEBI" id="CHEBI:29105"/>
    </ligand>
</feature>
<feature type="binding site" evidence="2">
    <location>
        <position position="43"/>
    </location>
    <ligand>
        <name>Zn(2+)</name>
        <dbReference type="ChEBI" id="CHEBI:29105"/>
    </ligand>
</feature>
<feature type="binding site" evidence="1">
    <location>
        <begin position="125"/>
        <end position="132"/>
    </location>
    <ligand>
        <name>ATP</name>
        <dbReference type="ChEBI" id="CHEBI:30616"/>
    </ligand>
</feature>
<comment type="function">
    <text evidence="1">ATP-dependent specificity component of the Clp protease. It directs the protease to specific substrates. Can perform chaperone functions in the absence of ClpP.</text>
</comment>
<comment type="subunit">
    <text evidence="1">Component of the ClpX-ClpP complex. Forms a hexameric ring that, in the presence of ATP, binds to fourteen ClpP subunits assembled into a disk-like structure with a central cavity, resembling the structure of eukaryotic proteasomes.</text>
</comment>
<comment type="similarity">
    <text evidence="1">Belongs to the ClpX chaperone family.</text>
</comment>
<gene>
    <name evidence="1" type="primary">clpX</name>
    <name type="ordered locus">Mmwyl1_1724</name>
</gene>
<organism>
    <name type="scientific">Marinomonas sp. (strain MWYL1)</name>
    <dbReference type="NCBI Taxonomy" id="400668"/>
    <lineage>
        <taxon>Bacteria</taxon>
        <taxon>Pseudomonadati</taxon>
        <taxon>Pseudomonadota</taxon>
        <taxon>Gammaproteobacteria</taxon>
        <taxon>Oceanospirillales</taxon>
        <taxon>Oceanospirillaceae</taxon>
        <taxon>Marinomonas</taxon>
    </lineage>
</organism>
<proteinExistence type="inferred from homology"/>
<protein>
    <recommendedName>
        <fullName evidence="1">ATP-dependent Clp protease ATP-binding subunit ClpX</fullName>
    </recommendedName>
</protein>